<sequence>MAAVTAKLVKELRDKTGAGMMDCKKALAATDGDTDKAVEWLRQKGIASAEKKSGRTAAEGSIGSYIHTGARVGVLIEINCETDFVARGDMFQELLRDVSMQVAACPNVEYVTTDEIPPEISEREKAIEMGRDDLEGKPEKMKEKIVEGRIAKRLKELALMEQPFIKDSSITVAELVKQAAGKIGENVKVRRFTRYTLGEGIEVEDNDFAAEVASMQNAG</sequence>
<name>EFTS_SYNS9</name>
<evidence type="ECO:0000255" key="1">
    <source>
        <dbReference type="HAMAP-Rule" id="MF_00050"/>
    </source>
</evidence>
<organism>
    <name type="scientific">Synechococcus sp. (strain CC9902)</name>
    <dbReference type="NCBI Taxonomy" id="316279"/>
    <lineage>
        <taxon>Bacteria</taxon>
        <taxon>Bacillati</taxon>
        <taxon>Cyanobacteriota</taxon>
        <taxon>Cyanophyceae</taxon>
        <taxon>Synechococcales</taxon>
        <taxon>Synechococcaceae</taxon>
        <taxon>Synechococcus</taxon>
    </lineage>
</organism>
<comment type="function">
    <text evidence="1">Associates with the EF-Tu.GDP complex and induces the exchange of GDP to GTP. It remains bound to the aminoacyl-tRNA.EF-Tu.GTP complex up to the GTP hydrolysis stage on the ribosome.</text>
</comment>
<comment type="subcellular location">
    <subcellularLocation>
        <location evidence="1">Cytoplasm</location>
    </subcellularLocation>
</comment>
<comment type="similarity">
    <text evidence="1">Belongs to the EF-Ts family.</text>
</comment>
<protein>
    <recommendedName>
        <fullName evidence="1">Elongation factor Ts</fullName>
        <shortName evidence="1">EF-Ts</shortName>
    </recommendedName>
</protein>
<keyword id="KW-0963">Cytoplasm</keyword>
<keyword id="KW-0251">Elongation factor</keyword>
<keyword id="KW-0648">Protein biosynthesis</keyword>
<keyword id="KW-1185">Reference proteome</keyword>
<dbReference type="EMBL" id="CP000097">
    <property type="protein sequence ID" value="ABB26210.1"/>
    <property type="molecule type" value="Genomic_DNA"/>
</dbReference>
<dbReference type="RefSeq" id="WP_011360037.1">
    <property type="nucleotide sequence ID" value="NC_007513.1"/>
</dbReference>
<dbReference type="SMR" id="Q3AXJ0"/>
<dbReference type="STRING" id="316279.Syncc9902_1246"/>
<dbReference type="KEGG" id="sye:Syncc9902_1246"/>
<dbReference type="eggNOG" id="COG0264">
    <property type="taxonomic scope" value="Bacteria"/>
</dbReference>
<dbReference type="HOGENOM" id="CLU_047155_1_1_3"/>
<dbReference type="OrthoDB" id="9808348at2"/>
<dbReference type="Proteomes" id="UP000002712">
    <property type="component" value="Chromosome"/>
</dbReference>
<dbReference type="GO" id="GO:0005737">
    <property type="term" value="C:cytoplasm"/>
    <property type="evidence" value="ECO:0007669"/>
    <property type="project" value="UniProtKB-SubCell"/>
</dbReference>
<dbReference type="GO" id="GO:0003746">
    <property type="term" value="F:translation elongation factor activity"/>
    <property type="evidence" value="ECO:0007669"/>
    <property type="project" value="UniProtKB-UniRule"/>
</dbReference>
<dbReference type="CDD" id="cd14275">
    <property type="entry name" value="UBA_EF-Ts"/>
    <property type="match status" value="1"/>
</dbReference>
<dbReference type="FunFam" id="1.10.286.20:FF:000001">
    <property type="entry name" value="Elongation factor Ts"/>
    <property type="match status" value="1"/>
</dbReference>
<dbReference type="FunFam" id="1.10.8.10:FF:000001">
    <property type="entry name" value="Elongation factor Ts"/>
    <property type="match status" value="1"/>
</dbReference>
<dbReference type="Gene3D" id="1.10.286.20">
    <property type="match status" value="1"/>
</dbReference>
<dbReference type="Gene3D" id="1.10.8.10">
    <property type="entry name" value="DNA helicase RuvA subunit, C-terminal domain"/>
    <property type="match status" value="1"/>
</dbReference>
<dbReference type="Gene3D" id="3.30.479.20">
    <property type="entry name" value="Elongation factor Ts, dimerisation domain"/>
    <property type="match status" value="1"/>
</dbReference>
<dbReference type="HAMAP" id="MF_00050">
    <property type="entry name" value="EF_Ts"/>
    <property type="match status" value="1"/>
</dbReference>
<dbReference type="InterPro" id="IPR036402">
    <property type="entry name" value="EF-Ts_dimer_sf"/>
</dbReference>
<dbReference type="InterPro" id="IPR001816">
    <property type="entry name" value="Transl_elong_EFTs/EF1B"/>
</dbReference>
<dbReference type="InterPro" id="IPR014039">
    <property type="entry name" value="Transl_elong_EFTs/EF1B_dimer"/>
</dbReference>
<dbReference type="InterPro" id="IPR018101">
    <property type="entry name" value="Transl_elong_Ts_CS"/>
</dbReference>
<dbReference type="InterPro" id="IPR009060">
    <property type="entry name" value="UBA-like_sf"/>
</dbReference>
<dbReference type="NCBIfam" id="TIGR00116">
    <property type="entry name" value="tsf"/>
    <property type="match status" value="1"/>
</dbReference>
<dbReference type="PANTHER" id="PTHR11741">
    <property type="entry name" value="ELONGATION FACTOR TS"/>
    <property type="match status" value="1"/>
</dbReference>
<dbReference type="PANTHER" id="PTHR11741:SF10">
    <property type="entry name" value="POLYPROTEIN OF EF-TS, CHLOROPLASTIC"/>
    <property type="match status" value="1"/>
</dbReference>
<dbReference type="Pfam" id="PF00889">
    <property type="entry name" value="EF_TS"/>
    <property type="match status" value="1"/>
</dbReference>
<dbReference type="SUPFAM" id="SSF54713">
    <property type="entry name" value="Elongation factor Ts (EF-Ts), dimerisation domain"/>
    <property type="match status" value="1"/>
</dbReference>
<dbReference type="SUPFAM" id="SSF46934">
    <property type="entry name" value="UBA-like"/>
    <property type="match status" value="1"/>
</dbReference>
<dbReference type="PROSITE" id="PS01126">
    <property type="entry name" value="EF_TS_1"/>
    <property type="match status" value="1"/>
</dbReference>
<dbReference type="PROSITE" id="PS01127">
    <property type="entry name" value="EF_TS_2"/>
    <property type="match status" value="1"/>
</dbReference>
<accession>Q3AXJ0</accession>
<feature type="chain" id="PRO_0000241540" description="Elongation factor Ts">
    <location>
        <begin position="1"/>
        <end position="219"/>
    </location>
</feature>
<feature type="region of interest" description="Involved in Mg(2+) ion dislocation from EF-Tu" evidence="1">
    <location>
        <begin position="82"/>
        <end position="85"/>
    </location>
</feature>
<proteinExistence type="inferred from homology"/>
<gene>
    <name evidence="1" type="primary">tsf</name>
    <name type="ordered locus">Syncc9902_1246</name>
</gene>
<reference key="1">
    <citation type="submission" date="2005-08" db="EMBL/GenBank/DDBJ databases">
        <title>Complete sequence of Synechococcus sp. CC9902.</title>
        <authorList>
            <person name="Copeland A."/>
            <person name="Lucas S."/>
            <person name="Lapidus A."/>
            <person name="Barry K."/>
            <person name="Detter J.C."/>
            <person name="Glavina T."/>
            <person name="Hammon N."/>
            <person name="Israni S."/>
            <person name="Pitluck S."/>
            <person name="Martinez M."/>
            <person name="Schmutz J."/>
            <person name="Larimer F."/>
            <person name="Land M."/>
            <person name="Kyrpides N."/>
            <person name="Ivanova N."/>
            <person name="Richardson P."/>
        </authorList>
    </citation>
    <scope>NUCLEOTIDE SEQUENCE [LARGE SCALE GENOMIC DNA]</scope>
    <source>
        <strain>CC9902</strain>
    </source>
</reference>